<protein>
    <recommendedName>
        <fullName>Spore germination protein YndF</fullName>
    </recommendedName>
</protein>
<name>YNDF_BACSU</name>
<gene>
    <name type="primary">yndF</name>
    <name type="ordered locus">BSU17770</name>
</gene>
<proteinExistence type="inferred from homology"/>
<dbReference type="EMBL" id="AL009126">
    <property type="protein sequence ID" value="CAB13661.1"/>
    <property type="molecule type" value="Genomic_DNA"/>
</dbReference>
<dbReference type="PIR" id="F69889">
    <property type="entry name" value="F69889"/>
</dbReference>
<dbReference type="RefSeq" id="NP_389660.1">
    <property type="nucleotide sequence ID" value="NC_000964.3"/>
</dbReference>
<dbReference type="RefSeq" id="WP_003245832.1">
    <property type="nucleotide sequence ID" value="NZ_OZ025638.1"/>
</dbReference>
<dbReference type="SMR" id="O31810"/>
<dbReference type="FunCoup" id="O31810">
    <property type="interactions" value="132"/>
</dbReference>
<dbReference type="STRING" id="224308.BSU17770"/>
<dbReference type="PaxDb" id="224308-BSU17770"/>
<dbReference type="DNASU" id="939547"/>
<dbReference type="EnsemblBacteria" id="CAB13661">
    <property type="protein sequence ID" value="CAB13661"/>
    <property type="gene ID" value="BSU_17770"/>
</dbReference>
<dbReference type="GeneID" id="939547"/>
<dbReference type="KEGG" id="bsu:BSU17770"/>
<dbReference type="PATRIC" id="fig|224308.179.peg.1937"/>
<dbReference type="eggNOG" id="ENOG502Z8GN">
    <property type="taxonomic scope" value="Bacteria"/>
</dbReference>
<dbReference type="InParanoid" id="O31810"/>
<dbReference type="OrthoDB" id="2569624at2"/>
<dbReference type="PhylomeDB" id="O31810"/>
<dbReference type="BioCyc" id="BSUB:BSU17770-MONOMER"/>
<dbReference type="Proteomes" id="UP000001570">
    <property type="component" value="Chromosome"/>
</dbReference>
<dbReference type="GO" id="GO:0005886">
    <property type="term" value="C:plasma membrane"/>
    <property type="evidence" value="ECO:0007669"/>
    <property type="project" value="UniProtKB-SubCell"/>
</dbReference>
<dbReference type="GO" id="GO:0009847">
    <property type="term" value="P:spore germination"/>
    <property type="evidence" value="ECO:0007669"/>
    <property type="project" value="InterPro"/>
</dbReference>
<dbReference type="Gene3D" id="3.30.300.210">
    <property type="entry name" value="Nutrient germinant receptor protein C, domain 3"/>
    <property type="match status" value="1"/>
</dbReference>
<dbReference type="InterPro" id="IPR008844">
    <property type="entry name" value="Spore_GerAC-like"/>
</dbReference>
<dbReference type="InterPro" id="IPR046953">
    <property type="entry name" value="Spore_GerAC-like_C"/>
</dbReference>
<dbReference type="InterPro" id="IPR038501">
    <property type="entry name" value="Spore_GerAC_C_sf"/>
</dbReference>
<dbReference type="NCBIfam" id="TIGR02887">
    <property type="entry name" value="spore_ger_x_C"/>
    <property type="match status" value="1"/>
</dbReference>
<dbReference type="PANTHER" id="PTHR35789">
    <property type="entry name" value="SPORE GERMINATION PROTEIN B3"/>
    <property type="match status" value="1"/>
</dbReference>
<dbReference type="PANTHER" id="PTHR35789:SF1">
    <property type="entry name" value="SPORE GERMINATION PROTEIN B3"/>
    <property type="match status" value="1"/>
</dbReference>
<dbReference type="Pfam" id="PF05504">
    <property type="entry name" value="Spore_GerAC"/>
    <property type="match status" value="1"/>
</dbReference>
<dbReference type="Pfam" id="PF25198">
    <property type="entry name" value="Spore_GerAC_N"/>
    <property type="match status" value="1"/>
</dbReference>
<evidence type="ECO:0000250" key="1"/>
<evidence type="ECO:0000255" key="2"/>
<evidence type="ECO:0000269" key="3">
    <source>
    </source>
</evidence>
<evidence type="ECO:0000305" key="4"/>
<accession>O31810</accession>
<sequence>MKSKLKRQLPAMVIVCLLMICVTGCWSSREIEDLGLTFAIAIDKGKETNTEKELKEEGGSYPKKDNITLTYQFVNEKAAGAGTSGGGGSGQGAQKAYINISETGDSLQQIGSEVALRRDREVFSPHLKVVVMSEDVLHTFPIDEMLDQFFRDNEIRLSCLVLSAKGEARDALQLKENGEIPAFRLIGLGENEHKVSRILPPMTLAKLIGKLHSGSSFLLQNVVAANGAVKYSGAAVINGKSKKMIGTLNEYETEGITWIRGEGKGGVVKSHDKKSQQTLAYDINKIKSRIQPIVKGKDISFHVDIESEGDLVENWNTKEALDTQFIDRLETTIENEVKKIVGQVLKKIQHDYKADVAGFDESFRLTYPHLWKRVKNNWDDTFSKADITYSVNVTITHFGTVKTQ</sequence>
<organism>
    <name type="scientific">Bacillus subtilis (strain 168)</name>
    <dbReference type="NCBI Taxonomy" id="224308"/>
    <lineage>
        <taxon>Bacteria</taxon>
        <taxon>Bacillati</taxon>
        <taxon>Bacillota</taxon>
        <taxon>Bacilli</taxon>
        <taxon>Bacillales</taxon>
        <taxon>Bacillaceae</taxon>
        <taxon>Bacillus</taxon>
    </lineage>
</organism>
<keyword id="KW-1003">Cell membrane</keyword>
<keyword id="KW-0309">Germination</keyword>
<keyword id="KW-0449">Lipoprotein</keyword>
<keyword id="KW-0472">Membrane</keyword>
<keyword id="KW-0564">Palmitate</keyword>
<keyword id="KW-1185">Reference proteome</keyword>
<keyword id="KW-0732">Signal</keyword>
<feature type="signal peptide" evidence="2">
    <location>
        <begin position="1"/>
        <end position="24"/>
    </location>
</feature>
<feature type="chain" id="PRO_0000360481" description="Spore germination protein YndF">
    <location>
        <begin position="25"/>
        <end position="404"/>
    </location>
</feature>
<feature type="lipid moiety-binding region" description="N-palmitoyl cysteine" evidence="2">
    <location>
        <position position="25"/>
    </location>
</feature>
<feature type="lipid moiety-binding region" description="S-diacylglycerol cysteine" evidence="2">
    <location>
        <position position="25"/>
    </location>
</feature>
<comment type="function">
    <text evidence="3">May be involved in spore germination.</text>
</comment>
<comment type="subcellular location">
    <subcellularLocation>
        <location evidence="1">Cell membrane</location>
        <topology evidence="1">Lipid-anchor</topology>
    </subcellularLocation>
</comment>
<comment type="similarity">
    <text evidence="4">Belongs to the GerABKC lipoprotein family.</text>
</comment>
<reference key="1">
    <citation type="journal article" date="1997" name="Nature">
        <title>The complete genome sequence of the Gram-positive bacterium Bacillus subtilis.</title>
        <authorList>
            <person name="Kunst F."/>
            <person name="Ogasawara N."/>
            <person name="Moszer I."/>
            <person name="Albertini A.M."/>
            <person name="Alloni G."/>
            <person name="Azevedo V."/>
            <person name="Bertero M.G."/>
            <person name="Bessieres P."/>
            <person name="Bolotin A."/>
            <person name="Borchert S."/>
            <person name="Borriss R."/>
            <person name="Boursier L."/>
            <person name="Brans A."/>
            <person name="Braun M."/>
            <person name="Brignell S.C."/>
            <person name="Bron S."/>
            <person name="Brouillet S."/>
            <person name="Bruschi C.V."/>
            <person name="Caldwell B."/>
            <person name="Capuano V."/>
            <person name="Carter N.M."/>
            <person name="Choi S.-K."/>
            <person name="Codani J.-J."/>
            <person name="Connerton I.F."/>
            <person name="Cummings N.J."/>
            <person name="Daniel R.A."/>
            <person name="Denizot F."/>
            <person name="Devine K.M."/>
            <person name="Duesterhoeft A."/>
            <person name="Ehrlich S.D."/>
            <person name="Emmerson P.T."/>
            <person name="Entian K.-D."/>
            <person name="Errington J."/>
            <person name="Fabret C."/>
            <person name="Ferrari E."/>
            <person name="Foulger D."/>
            <person name="Fritz C."/>
            <person name="Fujita M."/>
            <person name="Fujita Y."/>
            <person name="Fuma S."/>
            <person name="Galizzi A."/>
            <person name="Galleron N."/>
            <person name="Ghim S.-Y."/>
            <person name="Glaser P."/>
            <person name="Goffeau A."/>
            <person name="Golightly E.J."/>
            <person name="Grandi G."/>
            <person name="Guiseppi G."/>
            <person name="Guy B.J."/>
            <person name="Haga K."/>
            <person name="Haiech J."/>
            <person name="Harwood C.R."/>
            <person name="Henaut A."/>
            <person name="Hilbert H."/>
            <person name="Holsappel S."/>
            <person name="Hosono S."/>
            <person name="Hullo M.-F."/>
            <person name="Itaya M."/>
            <person name="Jones L.-M."/>
            <person name="Joris B."/>
            <person name="Karamata D."/>
            <person name="Kasahara Y."/>
            <person name="Klaerr-Blanchard M."/>
            <person name="Klein C."/>
            <person name="Kobayashi Y."/>
            <person name="Koetter P."/>
            <person name="Koningstein G."/>
            <person name="Krogh S."/>
            <person name="Kumano M."/>
            <person name="Kurita K."/>
            <person name="Lapidus A."/>
            <person name="Lardinois S."/>
            <person name="Lauber J."/>
            <person name="Lazarevic V."/>
            <person name="Lee S.-M."/>
            <person name="Levine A."/>
            <person name="Liu H."/>
            <person name="Masuda S."/>
            <person name="Mauel C."/>
            <person name="Medigue C."/>
            <person name="Medina N."/>
            <person name="Mellado R.P."/>
            <person name="Mizuno M."/>
            <person name="Moestl D."/>
            <person name="Nakai S."/>
            <person name="Noback M."/>
            <person name="Noone D."/>
            <person name="O'Reilly M."/>
            <person name="Ogawa K."/>
            <person name="Ogiwara A."/>
            <person name="Oudega B."/>
            <person name="Park S.-H."/>
            <person name="Parro V."/>
            <person name="Pohl T.M."/>
            <person name="Portetelle D."/>
            <person name="Porwollik S."/>
            <person name="Prescott A.M."/>
            <person name="Presecan E."/>
            <person name="Pujic P."/>
            <person name="Purnelle B."/>
            <person name="Rapoport G."/>
            <person name="Rey M."/>
            <person name="Reynolds S."/>
            <person name="Rieger M."/>
            <person name="Rivolta C."/>
            <person name="Rocha E."/>
            <person name="Roche B."/>
            <person name="Rose M."/>
            <person name="Sadaie Y."/>
            <person name="Sato T."/>
            <person name="Scanlan E."/>
            <person name="Schleich S."/>
            <person name="Schroeter R."/>
            <person name="Scoffone F."/>
            <person name="Sekiguchi J."/>
            <person name="Sekowska A."/>
            <person name="Seror S.J."/>
            <person name="Serror P."/>
            <person name="Shin B.-S."/>
            <person name="Soldo B."/>
            <person name="Sorokin A."/>
            <person name="Tacconi E."/>
            <person name="Takagi T."/>
            <person name="Takahashi H."/>
            <person name="Takemaru K."/>
            <person name="Takeuchi M."/>
            <person name="Tamakoshi A."/>
            <person name="Tanaka T."/>
            <person name="Terpstra P."/>
            <person name="Tognoni A."/>
            <person name="Tosato V."/>
            <person name="Uchiyama S."/>
            <person name="Vandenbol M."/>
            <person name="Vannier F."/>
            <person name="Vassarotti A."/>
            <person name="Viari A."/>
            <person name="Wambutt R."/>
            <person name="Wedler E."/>
            <person name="Wedler H."/>
            <person name="Weitzenegger T."/>
            <person name="Winters P."/>
            <person name="Wipat A."/>
            <person name="Yamamoto H."/>
            <person name="Yamane K."/>
            <person name="Yasumoto K."/>
            <person name="Yata K."/>
            <person name="Yoshida K."/>
            <person name="Yoshikawa H.-F."/>
            <person name="Zumstein E."/>
            <person name="Yoshikawa H."/>
            <person name="Danchin A."/>
        </authorList>
    </citation>
    <scope>NUCLEOTIDE SEQUENCE [LARGE SCALE GENOMIC DNA]</scope>
    <source>
        <strain>168</strain>
    </source>
</reference>
<reference key="2">
    <citation type="journal article" date="2000" name="J. Bacteriol.">
        <title>Role of ger proteins in nutrient and nonnutrient triggering of spore germination in Bacillus subtilis.</title>
        <authorList>
            <person name="Paidhungat M."/>
            <person name="Setlow P."/>
        </authorList>
    </citation>
    <scope>FUNCTION</scope>
</reference>